<name>PR1A2_ARATH</name>
<accession>Q8GWC3</accession>
<sequence length="209" mass="24187">MDWDNVAAEDVIEALREVEWSTPPRSFGEFFSRFAFPRSFSKWKSRLKCNLYYYRTNYFILVIFVLGLALVTRPLALVGAALTALSIAFLNDSFAASFNEKFIRTIRHFSPHMAAKMRPPHMPVIRGRSTARKTVYVCGKPRWVFVITFLTASLVMWFSSCGLLWVLYALLTSLAVIIVHASIRTPNLKARLNTFREEFRAVWRNYSEL</sequence>
<reference key="1">
    <citation type="journal article" date="1999" name="DNA Res.">
        <title>Structural analysis of Arabidopsis thaliana chromosome 5. IX. Sequence features of the regions of 1,011,550 bp covered by seventeen P1 and TAC clones.</title>
        <authorList>
            <person name="Kaneko T."/>
            <person name="Katoh T."/>
            <person name="Sato S."/>
            <person name="Nakamura Y."/>
            <person name="Asamizu E."/>
            <person name="Kotani H."/>
            <person name="Miyajima N."/>
            <person name="Tabata S."/>
        </authorList>
    </citation>
    <scope>NUCLEOTIDE SEQUENCE [LARGE SCALE GENOMIC DNA]</scope>
    <source>
        <strain>cv. Columbia</strain>
    </source>
</reference>
<reference key="2">
    <citation type="journal article" date="2017" name="Plant J.">
        <title>Araport11: a complete reannotation of the Arabidopsis thaliana reference genome.</title>
        <authorList>
            <person name="Cheng C.Y."/>
            <person name="Krishnakumar V."/>
            <person name="Chan A.P."/>
            <person name="Thibaud-Nissen F."/>
            <person name="Schobel S."/>
            <person name="Town C.D."/>
        </authorList>
    </citation>
    <scope>GENOME REANNOTATION</scope>
    <source>
        <strain>cv. Columbia</strain>
    </source>
</reference>
<reference key="3">
    <citation type="journal article" date="2002" name="Science">
        <title>Functional annotation of a full-length Arabidopsis cDNA collection.</title>
        <authorList>
            <person name="Seki M."/>
            <person name="Narusaka M."/>
            <person name="Kamiya A."/>
            <person name="Ishida J."/>
            <person name="Satou M."/>
            <person name="Sakurai T."/>
            <person name="Nakajima M."/>
            <person name="Enju A."/>
            <person name="Akiyama K."/>
            <person name="Oono Y."/>
            <person name="Muramatsu M."/>
            <person name="Hayashizaki Y."/>
            <person name="Kawai J."/>
            <person name="Carninci P."/>
            <person name="Itoh M."/>
            <person name="Ishii Y."/>
            <person name="Arakawa T."/>
            <person name="Shibata K."/>
            <person name="Shinagawa A."/>
            <person name="Shinozaki K."/>
        </authorList>
    </citation>
    <scope>NUCLEOTIDE SEQUENCE [LARGE SCALE MRNA]</scope>
    <source>
        <strain>cv. Columbia</strain>
    </source>
</reference>
<reference key="4">
    <citation type="journal article" date="2003" name="Science">
        <title>Empirical analysis of transcriptional activity in the Arabidopsis genome.</title>
        <authorList>
            <person name="Yamada K."/>
            <person name="Lim J."/>
            <person name="Dale J.M."/>
            <person name="Chen H."/>
            <person name="Shinn P."/>
            <person name="Palm C.J."/>
            <person name="Southwick A.M."/>
            <person name="Wu H.C."/>
            <person name="Kim C.J."/>
            <person name="Nguyen M."/>
            <person name="Pham P.K."/>
            <person name="Cheuk R.F."/>
            <person name="Karlin-Newmann G."/>
            <person name="Liu S.X."/>
            <person name="Lam B."/>
            <person name="Sakano H."/>
            <person name="Wu T."/>
            <person name="Yu G."/>
            <person name="Miranda M."/>
            <person name="Quach H.L."/>
            <person name="Tripp M."/>
            <person name="Chang C.H."/>
            <person name="Lee J.M."/>
            <person name="Toriumi M.J."/>
            <person name="Chan M.M."/>
            <person name="Tang C.C."/>
            <person name="Onodera C.S."/>
            <person name="Deng J.M."/>
            <person name="Akiyama K."/>
            <person name="Ansari Y."/>
            <person name="Arakawa T."/>
            <person name="Banh J."/>
            <person name="Banno F."/>
            <person name="Bowser L."/>
            <person name="Brooks S.Y."/>
            <person name="Carninci P."/>
            <person name="Chao Q."/>
            <person name="Choy N."/>
            <person name="Enju A."/>
            <person name="Goldsmith A.D."/>
            <person name="Gurjal M."/>
            <person name="Hansen N.F."/>
            <person name="Hayashizaki Y."/>
            <person name="Johnson-Hopson C."/>
            <person name="Hsuan V.W."/>
            <person name="Iida K."/>
            <person name="Karnes M."/>
            <person name="Khan S."/>
            <person name="Koesema E."/>
            <person name="Ishida J."/>
            <person name="Jiang P.X."/>
            <person name="Jones T."/>
            <person name="Kawai J."/>
            <person name="Kamiya A."/>
            <person name="Meyers C."/>
            <person name="Nakajima M."/>
            <person name="Narusaka M."/>
            <person name="Seki M."/>
            <person name="Sakurai T."/>
            <person name="Satou M."/>
            <person name="Tamse R."/>
            <person name="Vaysberg M."/>
            <person name="Wallender E.K."/>
            <person name="Wong C."/>
            <person name="Yamamura Y."/>
            <person name="Yuan S."/>
            <person name="Shinozaki K."/>
            <person name="Davis R.W."/>
            <person name="Theologis A."/>
            <person name="Ecker J.R."/>
        </authorList>
    </citation>
    <scope>NUCLEOTIDE SEQUENCE [LARGE SCALE MRNA]</scope>
    <source>
        <strain>cv. Columbia</strain>
    </source>
</reference>
<reference key="5">
    <citation type="journal article" date="2008" name="Plant Physiol.">
        <title>The PRA1 gene family in Arabidopsis.</title>
        <authorList>
            <person name="Alvim Kamei C.L."/>
            <person name="Boruc J."/>
            <person name="Vandepoele K."/>
            <person name="Van den Daele H."/>
            <person name="Maes S."/>
            <person name="Russinova E."/>
            <person name="Inze D."/>
            <person name="de Veylder L."/>
        </authorList>
    </citation>
    <scope>SUBCELLULAR LOCATION</scope>
    <scope>GENE FAMILY</scope>
    <scope>NOMENCLATURE</scope>
</reference>
<gene>
    <name type="primary">PRA1A2</name>
    <name type="ordered locus">At5g05987</name>
    <name type="ORF">K18J17</name>
</gene>
<proteinExistence type="evidence at transcript level"/>
<dbReference type="EMBL" id="AB017060">
    <property type="status" value="NOT_ANNOTATED_CDS"/>
    <property type="molecule type" value="Genomic_DNA"/>
</dbReference>
<dbReference type="EMBL" id="CP002688">
    <property type="protein sequence ID" value="AED90951.1"/>
    <property type="molecule type" value="Genomic_DNA"/>
</dbReference>
<dbReference type="EMBL" id="AK118943">
    <property type="protein sequence ID" value="BAC43523.1"/>
    <property type="molecule type" value="mRNA"/>
</dbReference>
<dbReference type="EMBL" id="BT005581">
    <property type="protein sequence ID" value="AAO64001.1"/>
    <property type="molecule type" value="mRNA"/>
</dbReference>
<dbReference type="FunCoup" id="Q8GWC3">
    <property type="interactions" value="2183"/>
</dbReference>
<dbReference type="STRING" id="3702.Q8GWC3"/>
<dbReference type="PaxDb" id="3702-AT5G05987.1"/>
<dbReference type="ProteomicsDB" id="226497"/>
<dbReference type="EnsemblPlants" id="AT5G05987.1">
    <property type="protein sequence ID" value="AT5G05987.1"/>
    <property type="gene ID" value="AT5G05987"/>
</dbReference>
<dbReference type="Gramene" id="AT5G05987.1">
    <property type="protein sequence ID" value="AT5G05987.1"/>
    <property type="gene ID" value="AT5G05987"/>
</dbReference>
<dbReference type="KEGG" id="ath:AT5G05987"/>
<dbReference type="Araport" id="AT5G05987"/>
<dbReference type="TAIR" id="AT5G05987">
    <property type="gene designation" value="PRA1.A2"/>
</dbReference>
<dbReference type="eggNOG" id="ENOG502QSIX">
    <property type="taxonomic scope" value="Eukaryota"/>
</dbReference>
<dbReference type="HOGENOM" id="CLU_078633_0_0_1"/>
<dbReference type="InParanoid" id="Q8GWC3"/>
<dbReference type="OMA" id="VACITRP"/>
<dbReference type="OrthoDB" id="537033at2759"/>
<dbReference type="PhylomeDB" id="Q8GWC3"/>
<dbReference type="PRO" id="PR:Q8GWC3"/>
<dbReference type="Proteomes" id="UP000006548">
    <property type="component" value="Chromosome 5"/>
</dbReference>
<dbReference type="ExpressionAtlas" id="Q8GWC3">
    <property type="expression patterns" value="baseline and differential"/>
</dbReference>
<dbReference type="GO" id="GO:0005783">
    <property type="term" value="C:endoplasmic reticulum"/>
    <property type="evidence" value="ECO:0000314"/>
    <property type="project" value="TAIR"/>
</dbReference>
<dbReference type="GO" id="GO:0010008">
    <property type="term" value="C:endosome membrane"/>
    <property type="evidence" value="ECO:0007669"/>
    <property type="project" value="UniProtKB-SubCell"/>
</dbReference>
<dbReference type="GO" id="GO:0016192">
    <property type="term" value="P:vesicle-mediated transport"/>
    <property type="evidence" value="ECO:0000314"/>
    <property type="project" value="TAIR"/>
</dbReference>
<dbReference type="InterPro" id="IPR004895">
    <property type="entry name" value="Prenylated_rab_accept_PRA1"/>
</dbReference>
<dbReference type="PANTHER" id="PTHR12859:SF4">
    <property type="entry name" value="PRA1 FAMILY PROTEIN A2"/>
    <property type="match status" value="1"/>
</dbReference>
<dbReference type="PANTHER" id="PTHR12859">
    <property type="entry name" value="PRA1 PROTEIN"/>
    <property type="match status" value="1"/>
</dbReference>
<dbReference type="Pfam" id="PF03208">
    <property type="entry name" value="PRA1"/>
    <property type="match status" value="1"/>
</dbReference>
<organism>
    <name type="scientific">Arabidopsis thaliana</name>
    <name type="common">Mouse-ear cress</name>
    <dbReference type="NCBI Taxonomy" id="3702"/>
    <lineage>
        <taxon>Eukaryota</taxon>
        <taxon>Viridiplantae</taxon>
        <taxon>Streptophyta</taxon>
        <taxon>Embryophyta</taxon>
        <taxon>Tracheophyta</taxon>
        <taxon>Spermatophyta</taxon>
        <taxon>Magnoliopsida</taxon>
        <taxon>eudicotyledons</taxon>
        <taxon>Gunneridae</taxon>
        <taxon>Pentapetalae</taxon>
        <taxon>rosids</taxon>
        <taxon>malvids</taxon>
        <taxon>Brassicales</taxon>
        <taxon>Brassicaceae</taxon>
        <taxon>Camelineae</taxon>
        <taxon>Arabidopsis</taxon>
    </lineage>
</organism>
<evidence type="ECO:0000250" key="1"/>
<evidence type="ECO:0000255" key="2"/>
<evidence type="ECO:0000269" key="3">
    <source>
    </source>
</evidence>
<evidence type="ECO:0000305" key="4"/>
<comment type="function">
    <text evidence="1">May be involved in both secretory and endocytic intracellular trafficking in the endosomal/prevacuolar compartments.</text>
</comment>
<comment type="subcellular location">
    <subcellularLocation>
        <location evidence="3">Endosome membrane</location>
        <topology evidence="3">Multi-pass membrane protein</topology>
    </subcellularLocation>
</comment>
<comment type="similarity">
    <text evidence="4">Belongs to the PRA1 family.</text>
</comment>
<keyword id="KW-0967">Endosome</keyword>
<keyword id="KW-0472">Membrane</keyword>
<keyword id="KW-1185">Reference proteome</keyword>
<keyword id="KW-0812">Transmembrane</keyword>
<keyword id="KW-1133">Transmembrane helix</keyword>
<keyword id="KW-0813">Transport</keyword>
<protein>
    <recommendedName>
        <fullName>PRA1 family protein A2</fullName>
        <shortName>AtPRA1.A2</shortName>
    </recommendedName>
</protein>
<feature type="chain" id="PRO_0000352248" description="PRA1 family protein A2">
    <location>
        <begin position="1"/>
        <end position="209"/>
    </location>
</feature>
<feature type="transmembrane region" description="Helical" evidence="2">
    <location>
        <begin position="51"/>
        <end position="72"/>
    </location>
</feature>
<feature type="transmembrane region" description="Helical" evidence="2">
    <location>
        <begin position="76"/>
        <end position="98"/>
    </location>
</feature>
<feature type="transmembrane region" description="Helical" evidence="2">
    <location>
        <begin position="142"/>
        <end position="162"/>
    </location>
</feature>
<feature type="transmembrane region" description="Helical" evidence="2">
    <location>
        <begin position="163"/>
        <end position="183"/>
    </location>
</feature>